<accession>P18302</accession>
<accession>Q91358</accession>
<accession>Q91359</accession>
<proteinExistence type="evidence at transcript level"/>
<dbReference type="EMBL" id="M36961">
    <property type="protein sequence ID" value="AAA48750.1"/>
    <property type="molecule type" value="mRNA"/>
</dbReference>
<dbReference type="EMBL" id="S65296">
    <property type="protein sequence ID" value="AAB28012.1"/>
    <property type="molecule type" value="Genomic_DNA"/>
</dbReference>
<dbReference type="EMBL" id="S65279">
    <property type="protein sequence ID" value="AAB28012.1"/>
    <property type="status" value="JOINED"/>
    <property type="molecule type" value="Genomic_DNA"/>
</dbReference>
<dbReference type="EMBL" id="S65280">
    <property type="protein sequence ID" value="AAB28012.1"/>
    <property type="status" value="JOINED"/>
    <property type="molecule type" value="Genomic_DNA"/>
</dbReference>
<dbReference type="EMBL" id="S65281">
    <property type="protein sequence ID" value="AAB28012.1"/>
    <property type="status" value="JOINED"/>
    <property type="molecule type" value="Genomic_DNA"/>
</dbReference>
<dbReference type="EMBL" id="S65288">
    <property type="protein sequence ID" value="AAB28012.1"/>
    <property type="status" value="JOINED"/>
    <property type="molecule type" value="Genomic_DNA"/>
</dbReference>
<dbReference type="EMBL" id="S65289">
    <property type="protein sequence ID" value="AAB28012.1"/>
    <property type="status" value="JOINED"/>
    <property type="molecule type" value="Genomic_DNA"/>
</dbReference>
<dbReference type="EMBL" id="S65290">
    <property type="protein sequence ID" value="AAB28012.1"/>
    <property type="status" value="JOINED"/>
    <property type="molecule type" value="Genomic_DNA"/>
</dbReference>
<dbReference type="EMBL" id="S65291">
    <property type="protein sequence ID" value="AAB28012.1"/>
    <property type="status" value="JOINED"/>
    <property type="molecule type" value="Genomic_DNA"/>
</dbReference>
<dbReference type="EMBL" id="S65292">
    <property type="protein sequence ID" value="AAB28012.1"/>
    <property type="status" value="JOINED"/>
    <property type="molecule type" value="Genomic_DNA"/>
</dbReference>
<dbReference type="EMBL" id="S65294">
    <property type="protein sequence ID" value="AAB28012.1"/>
    <property type="status" value="JOINED"/>
    <property type="molecule type" value="Genomic_DNA"/>
</dbReference>
<dbReference type="EMBL" id="S65267">
    <property type="protein sequence ID" value="AAB28011.2"/>
    <property type="molecule type" value="mRNA"/>
</dbReference>
<dbReference type="EMBL" id="S65230">
    <property type="protein sequence ID" value="AAB28010.1"/>
    <property type="molecule type" value="mRNA"/>
</dbReference>
<dbReference type="PIR" id="A43776">
    <property type="entry name" value="A43776"/>
</dbReference>
<dbReference type="PIR" id="I51213">
    <property type="entry name" value="I51213"/>
</dbReference>
<dbReference type="RefSeq" id="NP_990830.1">
    <property type="nucleotide sequence ID" value="NM_205499.1"/>
</dbReference>
<dbReference type="SMR" id="P18302"/>
<dbReference type="FunCoup" id="P18302">
    <property type="interactions" value="922"/>
</dbReference>
<dbReference type="STRING" id="9031.ENSGALP00000057425"/>
<dbReference type="PaxDb" id="9031-ENSGALP00000042083"/>
<dbReference type="KEGG" id="gga:396496"/>
<dbReference type="VEuPathDB" id="HostDB:geneid_396496"/>
<dbReference type="eggNOG" id="KOG3655">
    <property type="taxonomic scope" value="Eukaryota"/>
</dbReference>
<dbReference type="InParanoid" id="P18302"/>
<dbReference type="OrthoDB" id="5971719at2759"/>
<dbReference type="PhylomeDB" id="P18302"/>
<dbReference type="PRO" id="PR:P18302"/>
<dbReference type="Proteomes" id="UP000000539">
    <property type="component" value="Chromosome 13"/>
</dbReference>
<dbReference type="Bgee" id="ENSGALG00000033405">
    <property type="expression patterns" value="Expressed in brain and 10 other cell types or tissues"/>
</dbReference>
<dbReference type="GO" id="GO:0070161">
    <property type="term" value="C:anchoring junction"/>
    <property type="evidence" value="ECO:0007669"/>
    <property type="project" value="UniProtKB-SubCell"/>
</dbReference>
<dbReference type="GO" id="GO:0030864">
    <property type="term" value="C:cortical actin cytoskeleton"/>
    <property type="evidence" value="ECO:0000318"/>
    <property type="project" value="GO_Central"/>
</dbReference>
<dbReference type="GO" id="GO:0030425">
    <property type="term" value="C:dendrite"/>
    <property type="evidence" value="ECO:0000318"/>
    <property type="project" value="GO_Central"/>
</dbReference>
<dbReference type="GO" id="GO:0030426">
    <property type="term" value="C:growth cone"/>
    <property type="evidence" value="ECO:0000250"/>
    <property type="project" value="UniProtKB"/>
</dbReference>
<dbReference type="GO" id="GO:0030027">
    <property type="term" value="C:lamellipodium"/>
    <property type="evidence" value="ECO:0000318"/>
    <property type="project" value="GO_Central"/>
</dbReference>
<dbReference type="GO" id="GO:0014069">
    <property type="term" value="C:postsynaptic density"/>
    <property type="evidence" value="ECO:0000318"/>
    <property type="project" value="GO_Central"/>
</dbReference>
<dbReference type="GO" id="GO:0045211">
    <property type="term" value="C:postsynaptic membrane"/>
    <property type="evidence" value="ECO:0000318"/>
    <property type="project" value="GO_Central"/>
</dbReference>
<dbReference type="GO" id="GO:0030427">
    <property type="term" value="C:site of polarized growth"/>
    <property type="evidence" value="ECO:0000318"/>
    <property type="project" value="GO_Central"/>
</dbReference>
<dbReference type="GO" id="GO:0051015">
    <property type="term" value="F:actin filament binding"/>
    <property type="evidence" value="ECO:0000318"/>
    <property type="project" value="GO_Central"/>
</dbReference>
<dbReference type="GO" id="GO:0048812">
    <property type="term" value="P:neuron projection morphogenesis"/>
    <property type="evidence" value="ECO:0000318"/>
    <property type="project" value="GO_Central"/>
</dbReference>
<dbReference type="GO" id="GO:0045773">
    <property type="term" value="P:positive regulation of axon extension"/>
    <property type="evidence" value="ECO:0000318"/>
    <property type="project" value="GO_Central"/>
</dbReference>
<dbReference type="GO" id="GO:0061003">
    <property type="term" value="P:positive regulation of dendritic spine morphogenesis"/>
    <property type="evidence" value="ECO:0000318"/>
    <property type="project" value="GO_Central"/>
</dbReference>
<dbReference type="GO" id="GO:0098974">
    <property type="term" value="P:postsynaptic actin cytoskeleton organization"/>
    <property type="evidence" value="ECO:0000318"/>
    <property type="project" value="GO_Central"/>
</dbReference>
<dbReference type="GO" id="GO:0030833">
    <property type="term" value="P:regulation of actin filament polymerization"/>
    <property type="evidence" value="ECO:0000318"/>
    <property type="project" value="GO_Central"/>
</dbReference>
<dbReference type="CDD" id="cd11281">
    <property type="entry name" value="ADF_drebrin_like"/>
    <property type="match status" value="1"/>
</dbReference>
<dbReference type="FunFam" id="3.40.20.10:FF:000032">
    <property type="entry name" value="Drebrin 1"/>
    <property type="match status" value="1"/>
</dbReference>
<dbReference type="Gene3D" id="3.40.20.10">
    <property type="entry name" value="Severin"/>
    <property type="match status" value="1"/>
</dbReference>
<dbReference type="InterPro" id="IPR002108">
    <property type="entry name" value="ADF-H"/>
</dbReference>
<dbReference type="InterPro" id="IPR029006">
    <property type="entry name" value="ADF-H/Gelsolin-like_dom_sf"/>
</dbReference>
<dbReference type="PANTHER" id="PTHR10829">
    <property type="entry name" value="CORTACTIN AND DREBRIN"/>
    <property type="match status" value="1"/>
</dbReference>
<dbReference type="PANTHER" id="PTHR10829:SF1">
    <property type="entry name" value="DREBRIN"/>
    <property type="match status" value="1"/>
</dbReference>
<dbReference type="Pfam" id="PF00241">
    <property type="entry name" value="Cofilin_ADF"/>
    <property type="match status" value="1"/>
</dbReference>
<dbReference type="SMART" id="SM00102">
    <property type="entry name" value="ADF"/>
    <property type="match status" value="1"/>
</dbReference>
<dbReference type="SUPFAM" id="SSF55753">
    <property type="entry name" value="Actin depolymerizing proteins"/>
    <property type="match status" value="1"/>
</dbReference>
<dbReference type="PROSITE" id="PS51263">
    <property type="entry name" value="ADF_H"/>
    <property type="match status" value="1"/>
</dbReference>
<sequence>MAGVGFAAHRLELLASYQDVIGEDSPTDWALYTYEDGSDDLKLAASGGGGLLELSGHFEIQKVMYGFCSVKEPQAVLPKYVLVNWVGEDVPDARKCACASHVAKIAEFFQGVDVIVNASSVEDIDPGAIGQRLSNGLARVSSPVLHRLRLREDENAEPVGTTYQKTDATVEMKRLNREQFWEQAKKEEELRKEEERKKALDARLRFEQERMEQERLEQEERERRYREREEQIEEHRRKQQSMEAEEARQRLKEQSIFGEQQEEDDRQQLRKSESEVEEAAAIIAQRPDNPREFFKQQERVASGSGDAISPGSHRTGRLHCPFIKTADSGPPSSSSSSSSPPRTPFPYITCHRTPNLSSFFPCSQSDYRKVSAAGCSPCESSPASTPLGEQRTRAPAEETPATPKDSPSPSTQVAEPAATEQHWPFPGPEDKAAEPPGDEPDPDPRPAWTAGADVLGDLVTLEPSEPSPAPAASEPQPVETPGVAEPLIELWQSDGAAPAATSTWPLPDTPAGPPVPPEEGTLLGLDELPEPPATFCDAEQHEEVEEEEEEEEATAGEPHPTGLGYQEGYQEGPEVPPITNGEMGPKDGTAGRGEQASEGYFSQSQEEEAPPPEEPSAKAPQPVFYNKPPEIDITCWDTDPLPEEEESFGGGL</sequence>
<name>DREB_CHICK</name>
<keyword id="KW-0007">Acetylation</keyword>
<keyword id="KW-0009">Actin-binding</keyword>
<keyword id="KW-0025">Alternative splicing</keyword>
<keyword id="KW-0965">Cell junction</keyword>
<keyword id="KW-0966">Cell projection</keyword>
<keyword id="KW-0963">Cytoplasm</keyword>
<keyword id="KW-0217">Developmental protein</keyword>
<keyword id="KW-0221">Differentiation</keyword>
<keyword id="KW-0524">Neurogenesis</keyword>
<keyword id="KW-1185">Reference proteome</keyword>
<protein>
    <recommendedName>
        <fullName>Drebrin</fullName>
    </recommendedName>
    <alternativeName>
        <fullName>Developmentally-regulated brain protein</fullName>
    </alternativeName>
</protein>
<feature type="initiator methionine" description="Removed" evidence="1">
    <location>
        <position position="1"/>
    </location>
</feature>
<feature type="chain" id="PRO_0000080007" description="Drebrin">
    <location>
        <begin position="2"/>
        <end position="652"/>
    </location>
</feature>
<feature type="domain" description="ADF-H" evidence="4">
    <location>
        <begin position="5"/>
        <end position="134"/>
    </location>
</feature>
<feature type="region of interest" description="Disordered" evidence="5">
    <location>
        <begin position="211"/>
        <end position="350"/>
    </location>
</feature>
<feature type="region of interest" description="Disordered" evidence="5">
    <location>
        <begin position="371"/>
        <end position="652"/>
    </location>
</feature>
<feature type="compositionally biased region" description="Basic and acidic residues" evidence="5">
    <location>
        <begin position="211"/>
        <end position="236"/>
    </location>
</feature>
<feature type="compositionally biased region" description="Basic and acidic residues" evidence="5">
    <location>
        <begin position="288"/>
        <end position="298"/>
    </location>
</feature>
<feature type="compositionally biased region" description="Low complexity" evidence="5">
    <location>
        <begin position="328"/>
        <end position="340"/>
    </location>
</feature>
<feature type="compositionally biased region" description="Pro residues" evidence="5">
    <location>
        <begin position="507"/>
        <end position="517"/>
    </location>
</feature>
<feature type="compositionally biased region" description="Acidic residues" evidence="5">
    <location>
        <begin position="540"/>
        <end position="554"/>
    </location>
</feature>
<feature type="compositionally biased region" description="Acidic residues" evidence="5">
    <location>
        <begin position="640"/>
        <end position="652"/>
    </location>
</feature>
<feature type="modified residue" description="N-acetylalanine" evidence="1">
    <location>
        <position position="2"/>
    </location>
</feature>
<feature type="splice variant" id="VSP_004197" description="In isoform E2." evidence="6">
    <location>
        <begin position="307"/>
        <end position="405"/>
    </location>
</feature>
<feature type="splice variant" id="VSP_004196" description="In isoform E1." evidence="6">
    <location>
        <begin position="317"/>
        <end position="362"/>
    </location>
</feature>
<feature type="sequence conflict" description="In Ref. 1; AAA48750/AAB28011." evidence="7" ref="1">
    <original>E</original>
    <variation>EE</variation>
    <location>
        <position position="552"/>
    </location>
</feature>
<reference key="1">
    <citation type="journal article" date="1988" name="Brain Res.">
        <title>Nucleotide sequences of two embryonic drebrins, developmentally regulated brain proteins, and developmental change in their mRNAs.</title>
        <authorList>
            <person name="Kojima N."/>
            <person name="Kato Y."/>
            <person name="Shirao T."/>
            <person name="Obata K."/>
        </authorList>
    </citation>
    <scope>NUCLEOTIDE SEQUENCE [MRNA] (ISOFORMS E1 AND E2)</scope>
    <source>
        <tissue>Brain</tissue>
    </source>
</reference>
<reference key="2">
    <citation type="journal article" date="1993" name="Brain Res. Mol. Brain Res.">
        <title>Molecular cloning of a developmentally regulated brain protein, chicken drebrin A and its expression by alternative splicing of the drebrin gene.</title>
        <authorList>
            <person name="Kojima N."/>
            <person name="Shirao T."/>
            <person name="Obata K."/>
        </authorList>
    </citation>
    <scope>NUCLEOTIDE SEQUENCE [GENOMIC DNA / MRNA] (ISOFORM A)</scope>
</reference>
<evidence type="ECO:0000250" key="1"/>
<evidence type="ECO:0000250" key="2">
    <source>
        <dbReference type="UniProtKB" id="Q16643"/>
    </source>
</evidence>
<evidence type="ECO:0000250" key="3">
    <source>
        <dbReference type="UniProtKB" id="Q9QXS6"/>
    </source>
</evidence>
<evidence type="ECO:0000255" key="4">
    <source>
        <dbReference type="PROSITE-ProRule" id="PRU00599"/>
    </source>
</evidence>
<evidence type="ECO:0000256" key="5">
    <source>
        <dbReference type="SAM" id="MobiDB-lite"/>
    </source>
</evidence>
<evidence type="ECO:0000303" key="6">
    <source>
    </source>
</evidence>
<evidence type="ECO:0000305" key="7"/>
<comment type="function">
    <text evidence="2 3">Actin cytoskeleton-organizing protein that plays a role in the formation of cell projections (By similarity). Plays a role in dendritic spine morphogenesis and organization, including the localization of the dopamine receptor DRD1 to the dendritic spines (By similarity). Involved in synaptic plasticity (By similarity).</text>
</comment>
<comment type="subcellular location">
    <subcellularLocation>
        <location evidence="2">Cytoplasm</location>
    </subcellularLocation>
    <subcellularLocation>
        <location evidence="2">Cell projection</location>
        <location evidence="2">Dendrite</location>
    </subcellularLocation>
    <subcellularLocation>
        <location evidence="2">Cytoplasm</location>
        <location evidence="2">Cell cortex</location>
    </subcellularLocation>
    <subcellularLocation>
        <location evidence="2">Cell junction</location>
    </subcellularLocation>
    <subcellularLocation>
        <location evidence="3">Cell projection</location>
    </subcellularLocation>
    <subcellularLocation>
        <location evidence="3">Cell projection</location>
        <location evidence="3">Growth cone</location>
    </subcellularLocation>
</comment>
<comment type="alternative products">
    <event type="alternative splicing"/>
    <isoform>
        <id>P18302-1</id>
        <name>A</name>
        <sequence type="displayed"/>
    </isoform>
    <isoform>
        <id>P18302-2</id>
        <name>E1</name>
        <sequence type="described" ref="VSP_004196"/>
    </isoform>
    <isoform>
        <id>P18302-3</id>
        <name>E2</name>
        <sequence type="described" ref="VSP_004197"/>
    </isoform>
</comment>
<comment type="tissue specificity">
    <text>Brain neurons.</text>
</comment>
<comment type="miscellaneous">
    <text>Drebrins are classified into two forms of the embryonic type (E1 and E2) and one form of the adult type (A). The time course of their appearance are different from each other. Their structures are closely related.</text>
</comment>
<gene>
    <name type="primary">DBN1</name>
</gene>
<organism>
    <name type="scientific">Gallus gallus</name>
    <name type="common">Chicken</name>
    <dbReference type="NCBI Taxonomy" id="9031"/>
    <lineage>
        <taxon>Eukaryota</taxon>
        <taxon>Metazoa</taxon>
        <taxon>Chordata</taxon>
        <taxon>Craniata</taxon>
        <taxon>Vertebrata</taxon>
        <taxon>Euteleostomi</taxon>
        <taxon>Archelosauria</taxon>
        <taxon>Archosauria</taxon>
        <taxon>Dinosauria</taxon>
        <taxon>Saurischia</taxon>
        <taxon>Theropoda</taxon>
        <taxon>Coelurosauria</taxon>
        <taxon>Aves</taxon>
        <taxon>Neognathae</taxon>
        <taxon>Galloanserae</taxon>
        <taxon>Galliformes</taxon>
        <taxon>Phasianidae</taxon>
        <taxon>Phasianinae</taxon>
        <taxon>Gallus</taxon>
    </lineage>
</organism>